<organism>
    <name type="scientific">Archaeoglobus fulgidus (strain ATCC 49558 / DSM 4304 / JCM 9628 / NBRC 100126 / VC-16)</name>
    <dbReference type="NCBI Taxonomy" id="224325"/>
    <lineage>
        <taxon>Archaea</taxon>
        <taxon>Methanobacteriati</taxon>
        <taxon>Methanobacteriota</taxon>
        <taxon>Archaeoglobi</taxon>
        <taxon>Archaeoglobales</taxon>
        <taxon>Archaeoglobaceae</taxon>
        <taxon>Archaeoglobus</taxon>
    </lineage>
</organism>
<dbReference type="EMBL" id="AE000782">
    <property type="protein sequence ID" value="AAB90405.1"/>
    <property type="molecule type" value="Genomic_DNA"/>
</dbReference>
<dbReference type="PIR" id="B69355">
    <property type="entry name" value="B69355"/>
</dbReference>
<dbReference type="RefSeq" id="WP_010878345.1">
    <property type="nucleotide sequence ID" value="NC_000917.1"/>
</dbReference>
<dbReference type="STRING" id="224325.AF_0842"/>
<dbReference type="PaxDb" id="224325-AF_0842"/>
<dbReference type="EnsemblBacteria" id="AAB90405">
    <property type="protein sequence ID" value="AAB90405"/>
    <property type="gene ID" value="AF_0842"/>
</dbReference>
<dbReference type="GeneID" id="1484061"/>
<dbReference type="KEGG" id="afu:AF_0842"/>
<dbReference type="HOGENOM" id="CLU_2765810_0_0_2"/>
<dbReference type="Proteomes" id="UP000002199">
    <property type="component" value="Chromosome"/>
</dbReference>
<dbReference type="GO" id="GO:0005886">
    <property type="term" value="C:plasma membrane"/>
    <property type="evidence" value="ECO:0007669"/>
    <property type="project" value="UniProtKB-SubCell"/>
</dbReference>
<proteinExistence type="predicted"/>
<keyword id="KW-1003">Cell membrane</keyword>
<keyword id="KW-0472">Membrane</keyword>
<keyword id="KW-1185">Reference proteome</keyword>
<keyword id="KW-0812">Transmembrane</keyword>
<keyword id="KW-1133">Transmembrane helix</keyword>
<accession>O29416</accession>
<comment type="subcellular location">
    <subcellularLocation>
        <location evidence="2">Cell membrane</location>
        <topology evidence="2">Multi-pass membrane protein</topology>
    </subcellularLocation>
</comment>
<gene>
    <name type="ordered locus">AF_0842</name>
</gene>
<protein>
    <recommendedName>
        <fullName>Uncharacterized protein AF_0842</fullName>
    </recommendedName>
</protein>
<reference key="1">
    <citation type="journal article" date="1997" name="Nature">
        <title>The complete genome sequence of the hyperthermophilic, sulphate-reducing archaeon Archaeoglobus fulgidus.</title>
        <authorList>
            <person name="Klenk H.-P."/>
            <person name="Clayton R.A."/>
            <person name="Tomb J.-F."/>
            <person name="White O."/>
            <person name="Nelson K.E."/>
            <person name="Ketchum K.A."/>
            <person name="Dodson R.J."/>
            <person name="Gwinn M.L."/>
            <person name="Hickey E.K."/>
            <person name="Peterson J.D."/>
            <person name="Richardson D.L."/>
            <person name="Kerlavage A.R."/>
            <person name="Graham D.E."/>
            <person name="Kyrpides N.C."/>
            <person name="Fleischmann R.D."/>
            <person name="Quackenbush J."/>
            <person name="Lee N.H."/>
            <person name="Sutton G.G."/>
            <person name="Gill S.R."/>
            <person name="Kirkness E.F."/>
            <person name="Dougherty B.A."/>
            <person name="McKenney K."/>
            <person name="Adams M.D."/>
            <person name="Loftus B.J."/>
            <person name="Peterson S.N."/>
            <person name="Reich C.I."/>
            <person name="McNeil L.K."/>
            <person name="Badger J.H."/>
            <person name="Glodek A."/>
            <person name="Zhou L."/>
            <person name="Overbeek R."/>
            <person name="Gocayne J.D."/>
            <person name="Weidman J.F."/>
            <person name="McDonald L.A."/>
            <person name="Utterback T.R."/>
            <person name="Cotton M.D."/>
            <person name="Spriggs T."/>
            <person name="Artiach P."/>
            <person name="Kaine B.P."/>
            <person name="Sykes S.M."/>
            <person name="Sadow P.W."/>
            <person name="D'Andrea K.P."/>
            <person name="Bowman C."/>
            <person name="Fujii C."/>
            <person name="Garland S.A."/>
            <person name="Mason T.M."/>
            <person name="Olsen G.J."/>
            <person name="Fraser C.M."/>
            <person name="Smith H.O."/>
            <person name="Woese C.R."/>
            <person name="Venter J.C."/>
        </authorList>
    </citation>
    <scope>NUCLEOTIDE SEQUENCE [LARGE SCALE GENOMIC DNA]</scope>
    <source>
        <strain>ATCC 49558 / DSM 4304 / JCM 9628 / NBRC 100126 / VC-16</strain>
    </source>
</reference>
<sequence>MILLVALLSGLGLFLGVLAGLAGLILGSIFVVSPFVLLSAGGLALQVLNFLLLFISTIAGGFLGLLSFI</sequence>
<feature type="chain" id="PRO_0000127932" description="Uncharacterized protein AF_0842">
    <location>
        <begin position="1"/>
        <end position="69"/>
    </location>
</feature>
<feature type="transmembrane region" description="Helical" evidence="1">
    <location>
        <begin position="7"/>
        <end position="29"/>
    </location>
</feature>
<feature type="transmembrane region" description="Helical" evidence="1">
    <location>
        <begin position="44"/>
        <end position="66"/>
    </location>
</feature>
<evidence type="ECO:0000255" key="1"/>
<evidence type="ECO:0000305" key="2"/>
<name>Y842_ARCFU</name>